<comment type="function">
    <text evidence="1">Required for insertion of 4Fe-4S clusters for at least IspG.</text>
</comment>
<comment type="cofactor">
    <cofactor evidence="1">
        <name>iron-sulfur cluster</name>
        <dbReference type="ChEBI" id="CHEBI:30408"/>
    </cofactor>
    <text evidence="1">Binds 1 iron-sulfur cluster per subunit.</text>
</comment>
<comment type="subunit">
    <text evidence="1">Homodimer.</text>
</comment>
<comment type="similarity">
    <text evidence="1">Belongs to the HesB/IscA family.</text>
</comment>
<dbReference type="EMBL" id="BX571861">
    <property type="protein sequence ID" value="CAE13199.1"/>
    <property type="molecule type" value="Genomic_DNA"/>
</dbReference>
<dbReference type="SMR" id="Q7N843"/>
<dbReference type="STRING" id="243265.plu0904"/>
<dbReference type="KEGG" id="plu:plu0904"/>
<dbReference type="eggNOG" id="COG0316">
    <property type="taxonomic scope" value="Bacteria"/>
</dbReference>
<dbReference type="HOGENOM" id="CLU_069054_5_3_6"/>
<dbReference type="Proteomes" id="UP000002514">
    <property type="component" value="Chromosome"/>
</dbReference>
<dbReference type="GO" id="GO:0005829">
    <property type="term" value="C:cytosol"/>
    <property type="evidence" value="ECO:0007669"/>
    <property type="project" value="TreeGrafter"/>
</dbReference>
<dbReference type="GO" id="GO:0051537">
    <property type="term" value="F:2 iron, 2 sulfur cluster binding"/>
    <property type="evidence" value="ECO:0007669"/>
    <property type="project" value="TreeGrafter"/>
</dbReference>
<dbReference type="GO" id="GO:0051539">
    <property type="term" value="F:4 iron, 4 sulfur cluster binding"/>
    <property type="evidence" value="ECO:0007669"/>
    <property type="project" value="TreeGrafter"/>
</dbReference>
<dbReference type="GO" id="GO:0005506">
    <property type="term" value="F:iron ion binding"/>
    <property type="evidence" value="ECO:0007669"/>
    <property type="project" value="UniProtKB-UniRule"/>
</dbReference>
<dbReference type="GO" id="GO:0016226">
    <property type="term" value="P:iron-sulfur cluster assembly"/>
    <property type="evidence" value="ECO:0007669"/>
    <property type="project" value="UniProtKB-UniRule"/>
</dbReference>
<dbReference type="FunFam" id="2.60.300.12:FF:000002">
    <property type="entry name" value="Iron-sulfur cluster insertion protein ErpA"/>
    <property type="match status" value="1"/>
</dbReference>
<dbReference type="Gene3D" id="2.60.300.12">
    <property type="entry name" value="HesB-like domain"/>
    <property type="match status" value="1"/>
</dbReference>
<dbReference type="HAMAP" id="MF_01380">
    <property type="entry name" value="Fe_S_insert_ErpA"/>
    <property type="match status" value="1"/>
</dbReference>
<dbReference type="InterPro" id="IPR000361">
    <property type="entry name" value="FeS_biogenesis"/>
</dbReference>
<dbReference type="InterPro" id="IPR016092">
    <property type="entry name" value="FeS_cluster_insertion"/>
</dbReference>
<dbReference type="InterPro" id="IPR017870">
    <property type="entry name" value="FeS_cluster_insertion_CS"/>
</dbReference>
<dbReference type="InterPro" id="IPR023063">
    <property type="entry name" value="FeS_cluster_insertion_RrpA"/>
</dbReference>
<dbReference type="InterPro" id="IPR035903">
    <property type="entry name" value="HesB-like_dom_sf"/>
</dbReference>
<dbReference type="NCBIfam" id="TIGR00049">
    <property type="entry name" value="iron-sulfur cluster assembly accessory protein"/>
    <property type="match status" value="1"/>
</dbReference>
<dbReference type="NCBIfam" id="NF010147">
    <property type="entry name" value="PRK13623.1"/>
    <property type="match status" value="1"/>
</dbReference>
<dbReference type="PANTHER" id="PTHR43011">
    <property type="entry name" value="IRON-SULFUR CLUSTER ASSEMBLY 2 HOMOLOG, MITOCHONDRIAL"/>
    <property type="match status" value="1"/>
</dbReference>
<dbReference type="PANTHER" id="PTHR43011:SF1">
    <property type="entry name" value="IRON-SULFUR CLUSTER ASSEMBLY 2 HOMOLOG, MITOCHONDRIAL"/>
    <property type="match status" value="1"/>
</dbReference>
<dbReference type="Pfam" id="PF01521">
    <property type="entry name" value="Fe-S_biosyn"/>
    <property type="match status" value="1"/>
</dbReference>
<dbReference type="SUPFAM" id="SSF89360">
    <property type="entry name" value="HesB-like domain"/>
    <property type="match status" value="1"/>
</dbReference>
<dbReference type="PROSITE" id="PS01152">
    <property type="entry name" value="HESB"/>
    <property type="match status" value="1"/>
</dbReference>
<feature type="chain" id="PRO_0000311517" description="Iron-sulfur cluster insertion protein ErpA">
    <location>
        <begin position="1"/>
        <end position="115"/>
    </location>
</feature>
<feature type="binding site" evidence="1">
    <location>
        <position position="43"/>
    </location>
    <ligand>
        <name>iron-sulfur cluster</name>
        <dbReference type="ChEBI" id="CHEBI:30408"/>
    </ligand>
</feature>
<feature type="binding site" evidence="1">
    <location>
        <position position="107"/>
    </location>
    <ligand>
        <name>iron-sulfur cluster</name>
        <dbReference type="ChEBI" id="CHEBI:30408"/>
    </ligand>
</feature>
<feature type="binding site" evidence="1">
    <location>
        <position position="109"/>
    </location>
    <ligand>
        <name>iron-sulfur cluster</name>
        <dbReference type="ChEBI" id="CHEBI:30408"/>
    </ligand>
</feature>
<gene>
    <name evidence="1" type="primary">erpA</name>
    <name type="ordered locus">plu0904</name>
</gene>
<sequence>MMSDDIVLPLQFTDAAANKVKILVSDEENPNLRLRVYITGGGCSGFQYGFTFDDQINEGDMTIEKQGVELVVDPMSLQYLVGGCVDYTEGLEGSRFIVTNPNAKTTCGCGSSFSI</sequence>
<protein>
    <recommendedName>
        <fullName evidence="1">Iron-sulfur cluster insertion protein ErpA</fullName>
    </recommendedName>
</protein>
<name>ERPA_PHOLL</name>
<proteinExistence type="inferred from homology"/>
<evidence type="ECO:0000255" key="1">
    <source>
        <dbReference type="HAMAP-Rule" id="MF_01380"/>
    </source>
</evidence>
<organism>
    <name type="scientific">Photorhabdus laumondii subsp. laumondii (strain DSM 15139 / CIP 105565 / TT01)</name>
    <name type="common">Photorhabdus luminescens subsp. laumondii</name>
    <dbReference type="NCBI Taxonomy" id="243265"/>
    <lineage>
        <taxon>Bacteria</taxon>
        <taxon>Pseudomonadati</taxon>
        <taxon>Pseudomonadota</taxon>
        <taxon>Gammaproteobacteria</taxon>
        <taxon>Enterobacterales</taxon>
        <taxon>Morganellaceae</taxon>
        <taxon>Photorhabdus</taxon>
    </lineage>
</organism>
<keyword id="KW-0408">Iron</keyword>
<keyword id="KW-0411">Iron-sulfur</keyword>
<keyword id="KW-0479">Metal-binding</keyword>
<keyword id="KW-1185">Reference proteome</keyword>
<accession>Q7N843</accession>
<reference key="1">
    <citation type="journal article" date="2003" name="Nat. Biotechnol.">
        <title>The genome sequence of the entomopathogenic bacterium Photorhabdus luminescens.</title>
        <authorList>
            <person name="Duchaud E."/>
            <person name="Rusniok C."/>
            <person name="Frangeul L."/>
            <person name="Buchrieser C."/>
            <person name="Givaudan A."/>
            <person name="Taourit S."/>
            <person name="Bocs S."/>
            <person name="Boursaux-Eude C."/>
            <person name="Chandler M."/>
            <person name="Charles J.-F."/>
            <person name="Dassa E."/>
            <person name="Derose R."/>
            <person name="Derzelle S."/>
            <person name="Freyssinet G."/>
            <person name="Gaudriault S."/>
            <person name="Medigue C."/>
            <person name="Lanois A."/>
            <person name="Powell K."/>
            <person name="Siguier P."/>
            <person name="Vincent R."/>
            <person name="Wingate V."/>
            <person name="Zouine M."/>
            <person name="Glaser P."/>
            <person name="Boemare N."/>
            <person name="Danchin A."/>
            <person name="Kunst F."/>
        </authorList>
    </citation>
    <scope>NUCLEOTIDE SEQUENCE [LARGE SCALE GENOMIC DNA]</scope>
    <source>
        <strain>DSM 15139 / CIP 105565 / TT01</strain>
    </source>
</reference>